<reference key="1">
    <citation type="journal article" date="2005" name="J. Bacteriol.">
        <title>A hypervariable 130-kilobase genomic region of Magnetospirillum gryphiswaldense comprises a magnetosome island which undergoes frequent rearrangements during stationary growth.</title>
        <authorList>
            <person name="Ullrich S."/>
            <person name="Kube M."/>
            <person name="Schuebbe S."/>
            <person name="Reinhardt R."/>
            <person name="Schueler D."/>
        </authorList>
    </citation>
    <scope>NUCLEOTIDE SEQUENCE [GENOMIC DNA]</scope>
    <source>
        <strain>DSM 6361 / JCM 21280 / NBRC 15271 / MSR-1</strain>
    </source>
</reference>
<reference key="2">
    <citation type="journal article" date="2007" name="J. Bacteriol.">
        <title>Comparative genome analysis of four magnetotactic bacteria reveals a complex set of group-specific genes implicated in magnetosome biomineralization and function.</title>
        <authorList>
            <person name="Richter M."/>
            <person name="Kube M."/>
            <person name="Bazylinski D.A."/>
            <person name="Lombardot T."/>
            <person name="Gloeckner F.O."/>
            <person name="Reinhardt R."/>
            <person name="Schueler D."/>
        </authorList>
    </citation>
    <scope>NUCLEOTIDE SEQUENCE [LARGE SCALE GENOMIC DNA]</scope>
    <source>
        <strain>DSM 6361 / JCM 21280 / NBRC 15271 / MSR-1</strain>
    </source>
</reference>
<reference key="3">
    <citation type="journal article" date="2014" name="Genome Announc.">
        <title>Complete genome sequence of Magnetospirillum gryphiswaldense MSR-1.</title>
        <authorList>
            <person name="Wang X."/>
            <person name="Wang Q."/>
            <person name="Zhang W."/>
            <person name="Wang Y."/>
            <person name="Li L."/>
            <person name="Wen T."/>
            <person name="Zhang T."/>
            <person name="Zhang Y."/>
            <person name="Xu J."/>
            <person name="Hu J."/>
            <person name="Li S."/>
            <person name="Liu L."/>
            <person name="Liu J."/>
            <person name="Jiang W."/>
            <person name="Tian J."/>
            <person name="Li Y."/>
            <person name="Schuler D."/>
            <person name="Wang L."/>
            <person name="Li J."/>
        </authorList>
    </citation>
    <scope>NUCLEOTIDE SEQUENCE [LARGE SCALE GENOMIC DNA]</scope>
    <source>
        <strain>DSM 6361 / JCM 21280 / NBRC 15271 / MSR-1</strain>
    </source>
</reference>
<reference key="4">
    <citation type="journal article" date="2003" name="J. Bacteriol.">
        <title>Characterization of a spontaneous nonmagnetic mutant of Magnetospirillum gryphiswaldense reveals a large deletion comprising a putative magnetosome island.</title>
        <authorList>
            <person name="Schuebbe S."/>
            <person name="Kube M."/>
            <person name="Scheffel A."/>
            <person name="Wawer C."/>
            <person name="Heyen U."/>
            <person name="Meyerdierks A."/>
            <person name="Madkour M.H."/>
            <person name="Mayer F."/>
            <person name="Reinhardt R."/>
            <person name="Schueler D."/>
        </authorList>
    </citation>
    <scope>NUCLEOTIDE SEQUENCE [GENOMIC DNA] OF 1-231</scope>
    <scope>DISRUPTION PHENOTYPE</scope>
    <source>
        <strain>DSM 6361 / JCM 21280 / NBRC 15271 / MSR-1</strain>
    </source>
</reference>
<reference key="5">
    <citation type="journal article" date="2011" name="PLoS ONE">
        <title>Functional analysis of the magnetosome island in Magnetospirillum gryphiswaldense: the mamAB operon is sufficient for magnetite biomineralization.</title>
        <authorList>
            <person name="Lohsse A."/>
            <person name="Ullrich S."/>
            <person name="Katzmann E."/>
            <person name="Borg S."/>
            <person name="Wanner G."/>
            <person name="Richter M."/>
            <person name="Voigt B."/>
            <person name="Schweder T."/>
            <person name="Schueler D."/>
        </authorList>
    </citation>
    <scope>PROBABLE OPERON</scope>
    <scope>DISRUPTION PHENOTYPE</scope>
    <source>
        <strain>DSM 6361 / JCM 21280 / NBRC 15271 / MSR-1</strain>
    </source>
</reference>
<reference key="6">
    <citation type="journal article" date="2014" name="J. Bacteriol.">
        <title>Genetic dissection of the mamAB and mms6 operons reveals a gene set essential for magnetosome biogenesis in Magnetospirillum gryphiswaldense.</title>
        <authorList>
            <person name="Lohsse A."/>
            <person name="Borg S."/>
            <person name="Raschdorf O."/>
            <person name="Kolinko I."/>
            <person name="Tompa E."/>
            <person name="Posfai M."/>
            <person name="Faivre D."/>
            <person name="Baumgartner J."/>
            <person name="Schueler D."/>
        </authorList>
    </citation>
    <scope>FUNCTION</scope>
    <scope>PROBABLE OPERON</scope>
    <scope>DOMAIN</scope>
    <scope>DISRUPTION PHENOTYPE</scope>
    <source>
        <strain>DSM 6361 / JCM 21280 / NBRC 15271 / MSR-1</strain>
    </source>
</reference>
<feature type="signal peptide" evidence="1">
    <location>
        <begin position="1"/>
        <end position="18"/>
    </location>
</feature>
<feature type="chain" id="PRO_0000447735" description="Probable magnetosome protein Mms48">
    <location>
        <begin position="19"/>
        <end position="449"/>
    </location>
</feature>
<feature type="transmembrane region" description="Helical" evidence="1">
    <location>
        <begin position="40"/>
        <end position="60"/>
    </location>
</feature>
<feature type="repeat" description="TPR" evidence="2 10">
    <location>
        <begin position="323"/>
        <end position="356"/>
    </location>
</feature>
<proteinExistence type="inferred from homology"/>
<sequence>MLLRLIVLLIFMSPVVFATLWFSDNVGSVQVEWLGWHVDSNMPVLLAVILVVFLIFSALSRLSALVADLPSKLGKSRQARGLEKGMSALLAALDAAESGDVGEGRRFAAEAARLLNNPGLAARLDRLLPRPPAQPVAPTRLEAAKGRLFARKPGPPPPPTPVVDKIQPVVVEKLAAAPAGPSREDLEAFSAKIRAGEWGAAQAWIGEAVLAGRLTPLVAARWRSVALEGQALEASPGDPARPLRLAREAMAADQTFLPPALHVIRAEVSEGRKAEAETLLASVWPHVPARVLLDACAPLWRDEDQDACLKRLEALAAIAPHHPDGHLAAGEAAFAVQKWGVARRHIMAALKIAPDALGCRLMAEIEEREPGGSARSAEIWRRREHEASLSPAWVCGACARVVEAWAACCPSCAGVATIEWTRSVKAEEALLPPATTASSMETPRLFRST</sequence>
<name>MMS48_MAGGM</name>
<protein>
    <recommendedName>
        <fullName evidence="6">Probable magnetosome protein Mms48</fullName>
    </recommendedName>
</protein>
<accession>Q3BKD5</accession>
<accession>Q6NE79</accession>
<accession>V6F2D7</accession>
<keyword id="KW-0091">Biomineralization</keyword>
<keyword id="KW-1281">Magnetosome</keyword>
<keyword id="KW-0472">Membrane</keyword>
<keyword id="KW-1185">Reference proteome</keyword>
<keyword id="KW-0732">Signal</keyword>
<keyword id="KW-0802">TPR repeat</keyword>
<keyword id="KW-0812">Transmembrane</keyword>
<keyword id="KW-1133">Transmembrane helix</keyword>
<dbReference type="EMBL" id="AM085146">
    <property type="protein sequence ID" value="CAJ30093.1"/>
    <property type="molecule type" value="Genomic_DNA"/>
</dbReference>
<dbReference type="EMBL" id="CU459003">
    <property type="protein sequence ID" value="CAM78002.1"/>
    <property type="molecule type" value="Genomic_DNA"/>
</dbReference>
<dbReference type="EMBL" id="HG794546">
    <property type="protein sequence ID" value="CDK99614.1"/>
    <property type="molecule type" value="Genomic_DNA"/>
</dbReference>
<dbReference type="EMBL" id="BX571797">
    <property type="protein sequence ID" value="CAE12014.1"/>
    <property type="molecule type" value="Genomic_DNA"/>
</dbReference>
<dbReference type="RefSeq" id="WP_024080608.1">
    <property type="nucleotide sequence ID" value="NZ_CP027526.1"/>
</dbReference>
<dbReference type="SMR" id="Q3BKD5"/>
<dbReference type="STRING" id="1430440.MGMSRv2__2399"/>
<dbReference type="KEGG" id="mgry:MSR1_03150"/>
<dbReference type="KEGG" id="mgy:MGMSRv2__2399"/>
<dbReference type="eggNOG" id="COG3898">
    <property type="taxonomic scope" value="Bacteria"/>
</dbReference>
<dbReference type="HOGENOM" id="CLU_028454_0_0_5"/>
<dbReference type="OrthoDB" id="9798343at2"/>
<dbReference type="Proteomes" id="UP000018922">
    <property type="component" value="Chromosome I"/>
</dbReference>
<dbReference type="GO" id="GO:0110146">
    <property type="term" value="C:magnetosome membrane"/>
    <property type="evidence" value="ECO:0007669"/>
    <property type="project" value="UniProtKB-SubCell"/>
</dbReference>
<dbReference type="InterPro" id="IPR010817">
    <property type="entry name" value="HemY_N"/>
</dbReference>
<dbReference type="InterPro" id="IPR016982">
    <property type="entry name" value="Mms48"/>
</dbReference>
<dbReference type="InterPro" id="IPR011990">
    <property type="entry name" value="TPR-like_helical_dom_sf"/>
</dbReference>
<dbReference type="Pfam" id="PF07219">
    <property type="entry name" value="HemY_N"/>
    <property type="match status" value="1"/>
</dbReference>
<dbReference type="PIRSF" id="PIRSF031802">
    <property type="entry name" value="UCP031802"/>
    <property type="match status" value="1"/>
</dbReference>
<dbReference type="SUPFAM" id="SSF48452">
    <property type="entry name" value="TPR-like"/>
    <property type="match status" value="1"/>
</dbReference>
<evidence type="ECO:0000255" key="1"/>
<evidence type="ECO:0000255" key="2">
    <source>
        <dbReference type="PROSITE-ProRule" id="PRU00339"/>
    </source>
</evidence>
<evidence type="ECO:0000269" key="3">
    <source>
    </source>
</evidence>
<evidence type="ECO:0000269" key="4">
    <source>
    </source>
</evidence>
<evidence type="ECO:0000303" key="5">
    <source>
    </source>
</evidence>
<evidence type="ECO:0000303" key="6">
    <source>
    </source>
</evidence>
<evidence type="ECO:0000305" key="7"/>
<evidence type="ECO:0000305" key="8">
    <source>
    </source>
</evidence>
<evidence type="ECO:0000305" key="9">
    <source>
    </source>
</evidence>
<evidence type="ECO:0000305" key="10">
    <source>
    </source>
</evidence>
<comment type="function">
    <text evidence="4">Overexpression in wild-type cells increases the number of cells with double magnetosome chains significantly. The 4 genes of this operon collectively influence magnetosome size and number.</text>
</comment>
<comment type="subcellular location">
    <subcellularLocation>
        <location evidence="7">Magnetosome membrane</location>
        <topology evidence="1">Single-pass membrane protein</topology>
    </subcellularLocation>
</comment>
<comment type="induction">
    <text evidence="9 10">Part of the probable mms6 operon.</text>
</comment>
<comment type="disruption phenotype">
    <text evidence="3 4">Normal magnetic response, fewer, larger magnetosomes; cells accumulate 20% more iron (PubMed:24816605). Deletion of the 4 gene operon (mms6, mmsF, mms36 and mms48) gives an intermediate magnetic response with fewer, smaller magnetosomes in irregular pseudo-chains (PubMed:22043287, PubMed:24816605).</text>
</comment>
<comment type="miscellaneous">
    <text evidence="8">This bacteria makes up to 60 cubo-octahedral magnetosomes of about 45 nm in diameter which contain membrane-bound crystals of magnetite (Fe(3)O(4)).</text>
</comment>
<organism>
    <name type="scientific">Magnetospirillum gryphiswaldense (strain DSM 6361 / JCM 21280 / NBRC 15271 / MSR-1)</name>
    <dbReference type="NCBI Taxonomy" id="431944"/>
    <lineage>
        <taxon>Bacteria</taxon>
        <taxon>Pseudomonadati</taxon>
        <taxon>Pseudomonadota</taxon>
        <taxon>Alphaproteobacteria</taxon>
        <taxon>Rhodospirillales</taxon>
        <taxon>Rhodospirillaceae</taxon>
        <taxon>Magnetospirillum</taxon>
    </lineage>
</organism>
<gene>
    <name evidence="6" type="primary">mms48</name>
    <name type="ordered locus">MGMSRv2__2399</name>
    <name type="ORF">mgI457</name>
    <name type="ORF">MGR_4070</name>
    <name evidence="5" type="ORF">ORF1</name>
</gene>